<name>CSRA_ALCBS</name>
<dbReference type="EMBL" id="AM286690">
    <property type="protein sequence ID" value="CAL17244.1"/>
    <property type="molecule type" value="Genomic_DNA"/>
</dbReference>
<dbReference type="RefSeq" id="WP_011589077.1">
    <property type="nucleotide sequence ID" value="NC_008260.1"/>
</dbReference>
<dbReference type="SMR" id="Q0VNK4"/>
<dbReference type="STRING" id="393595.ABO_1796"/>
<dbReference type="KEGG" id="abo:ABO_1796"/>
<dbReference type="eggNOG" id="COG1551">
    <property type="taxonomic scope" value="Bacteria"/>
</dbReference>
<dbReference type="HOGENOM" id="CLU_164837_2_1_6"/>
<dbReference type="OrthoDB" id="9809061at2"/>
<dbReference type="Proteomes" id="UP000008871">
    <property type="component" value="Chromosome"/>
</dbReference>
<dbReference type="GO" id="GO:0005829">
    <property type="term" value="C:cytosol"/>
    <property type="evidence" value="ECO:0007669"/>
    <property type="project" value="TreeGrafter"/>
</dbReference>
<dbReference type="GO" id="GO:0048027">
    <property type="term" value="F:mRNA 5'-UTR binding"/>
    <property type="evidence" value="ECO:0007669"/>
    <property type="project" value="UniProtKB-UniRule"/>
</dbReference>
<dbReference type="GO" id="GO:0006402">
    <property type="term" value="P:mRNA catabolic process"/>
    <property type="evidence" value="ECO:0007669"/>
    <property type="project" value="InterPro"/>
</dbReference>
<dbReference type="GO" id="GO:0045947">
    <property type="term" value="P:negative regulation of translational initiation"/>
    <property type="evidence" value="ECO:0007669"/>
    <property type="project" value="UniProtKB-UniRule"/>
</dbReference>
<dbReference type="GO" id="GO:0045948">
    <property type="term" value="P:positive regulation of translational initiation"/>
    <property type="evidence" value="ECO:0007669"/>
    <property type="project" value="UniProtKB-UniRule"/>
</dbReference>
<dbReference type="GO" id="GO:0006109">
    <property type="term" value="P:regulation of carbohydrate metabolic process"/>
    <property type="evidence" value="ECO:0007669"/>
    <property type="project" value="UniProtKB-UniRule"/>
</dbReference>
<dbReference type="FunFam" id="2.60.40.4380:FF:000001">
    <property type="entry name" value="Translational regulator CsrA"/>
    <property type="match status" value="1"/>
</dbReference>
<dbReference type="Gene3D" id="2.60.40.4380">
    <property type="entry name" value="Translational regulator CsrA"/>
    <property type="match status" value="1"/>
</dbReference>
<dbReference type="HAMAP" id="MF_00167">
    <property type="entry name" value="CsrA"/>
    <property type="match status" value="1"/>
</dbReference>
<dbReference type="InterPro" id="IPR003751">
    <property type="entry name" value="CsrA"/>
</dbReference>
<dbReference type="InterPro" id="IPR036107">
    <property type="entry name" value="CsrA_sf"/>
</dbReference>
<dbReference type="NCBIfam" id="TIGR00202">
    <property type="entry name" value="csrA"/>
    <property type="match status" value="1"/>
</dbReference>
<dbReference type="NCBIfam" id="NF002469">
    <property type="entry name" value="PRK01712.1"/>
    <property type="match status" value="1"/>
</dbReference>
<dbReference type="PANTHER" id="PTHR34984">
    <property type="entry name" value="CARBON STORAGE REGULATOR"/>
    <property type="match status" value="1"/>
</dbReference>
<dbReference type="PANTHER" id="PTHR34984:SF1">
    <property type="entry name" value="CARBON STORAGE REGULATOR"/>
    <property type="match status" value="1"/>
</dbReference>
<dbReference type="Pfam" id="PF02599">
    <property type="entry name" value="CsrA"/>
    <property type="match status" value="1"/>
</dbReference>
<dbReference type="SUPFAM" id="SSF117130">
    <property type="entry name" value="CsrA-like"/>
    <property type="match status" value="1"/>
</dbReference>
<proteinExistence type="inferred from homology"/>
<comment type="function">
    <text evidence="1">A key translational regulator that binds mRNA to regulate translation initiation and/or mRNA stability. Mediates global changes in gene expression, shifting from rapid growth to stress survival by linking envelope stress, the stringent response and the catabolite repression systems. Usually binds in the 5'-UTR; binding at or near the Shine-Dalgarno sequence prevents ribosome-binding, repressing translation, binding elsewhere in the 5'-UTR can activate translation and/or stabilize the mRNA. Its function is antagonized by small RNA(s).</text>
</comment>
<comment type="subunit">
    <text evidence="1">Homodimer; the beta-strands of each monomer intercalate to form a hydrophobic core, while the alpha-helices form wings that extend away from the core.</text>
</comment>
<comment type="subcellular location">
    <subcellularLocation>
        <location evidence="1">Cytoplasm</location>
    </subcellularLocation>
</comment>
<comment type="similarity">
    <text evidence="1">Belongs to the CsrA/RsmA family.</text>
</comment>
<evidence type="ECO:0000255" key="1">
    <source>
        <dbReference type="HAMAP-Rule" id="MF_00167"/>
    </source>
</evidence>
<keyword id="KW-0010">Activator</keyword>
<keyword id="KW-0963">Cytoplasm</keyword>
<keyword id="KW-1185">Reference proteome</keyword>
<keyword id="KW-0678">Repressor</keyword>
<keyword id="KW-0694">RNA-binding</keyword>
<keyword id="KW-0810">Translation regulation</keyword>
<accession>Q0VNK4</accession>
<feature type="chain" id="PRO_1000023358" description="Translational regulator CsrA">
    <location>
        <begin position="1"/>
        <end position="62"/>
    </location>
</feature>
<organism>
    <name type="scientific">Alcanivorax borkumensis (strain ATCC 700651 / DSM 11573 / NCIMB 13689 / SK2)</name>
    <dbReference type="NCBI Taxonomy" id="393595"/>
    <lineage>
        <taxon>Bacteria</taxon>
        <taxon>Pseudomonadati</taxon>
        <taxon>Pseudomonadota</taxon>
        <taxon>Gammaproteobacteria</taxon>
        <taxon>Oceanospirillales</taxon>
        <taxon>Alcanivoracaceae</taxon>
        <taxon>Alcanivorax</taxon>
    </lineage>
</organism>
<reference key="1">
    <citation type="journal article" date="2006" name="Nat. Biotechnol.">
        <title>Genome sequence of the ubiquitous hydrocarbon-degrading marine bacterium Alcanivorax borkumensis.</title>
        <authorList>
            <person name="Schneiker S."/>
            <person name="Martins dos Santos V.A.P."/>
            <person name="Bartels D."/>
            <person name="Bekel T."/>
            <person name="Brecht M."/>
            <person name="Buhrmester J."/>
            <person name="Chernikova T.N."/>
            <person name="Denaro R."/>
            <person name="Ferrer M."/>
            <person name="Gertler C."/>
            <person name="Goesmann A."/>
            <person name="Golyshina O.V."/>
            <person name="Kaminski F."/>
            <person name="Khachane A.N."/>
            <person name="Lang S."/>
            <person name="Linke B."/>
            <person name="McHardy A.C."/>
            <person name="Meyer F."/>
            <person name="Nechitaylo T."/>
            <person name="Puehler A."/>
            <person name="Regenhardt D."/>
            <person name="Rupp O."/>
            <person name="Sabirova J.S."/>
            <person name="Selbitschka W."/>
            <person name="Yakimov M.M."/>
            <person name="Timmis K.N."/>
            <person name="Vorhoelter F.-J."/>
            <person name="Weidner S."/>
            <person name="Kaiser O."/>
            <person name="Golyshin P.N."/>
        </authorList>
    </citation>
    <scope>NUCLEOTIDE SEQUENCE [LARGE SCALE GENOMIC DNA]</scope>
    <source>
        <strain>ATCC 700651 / DSM 11573 / NCIMB 13689 / SK2</strain>
    </source>
</reference>
<protein>
    <recommendedName>
        <fullName evidence="1">Translational regulator CsrA</fullName>
    </recommendedName>
    <alternativeName>
        <fullName evidence="1">Carbon storage regulator</fullName>
    </alternativeName>
</protein>
<gene>
    <name evidence="1" type="primary">csrA</name>
    <name type="ordered locus">ABO_1796</name>
</gene>
<sequence>MLILTRRVGETLMVGDEVTVTVLGVKGNQVRIGVNAPKEVAVHREEIYQRIQHEKSSDGESA</sequence>